<feature type="chain" id="PRO_0000068866" description="Rap guanine nucleotide exchange factor 2">
    <location>
        <begin position="1"/>
        <end position="1496"/>
    </location>
</feature>
<feature type="domain" description="N-terminal Ras-GEF" evidence="4">
    <location>
        <begin position="267"/>
        <end position="380"/>
    </location>
</feature>
<feature type="domain" description="PDZ" evidence="5">
    <location>
        <begin position="385"/>
        <end position="470"/>
    </location>
</feature>
<feature type="domain" description="Ras-associating" evidence="6">
    <location>
        <begin position="606"/>
        <end position="692"/>
    </location>
</feature>
<feature type="domain" description="Ras-GEF" evidence="7">
    <location>
        <begin position="717"/>
        <end position="944"/>
    </location>
</feature>
<feature type="region of interest" description="Disordered" evidence="8">
    <location>
        <begin position="40"/>
        <end position="59"/>
    </location>
</feature>
<feature type="region of interest" description="Disordered" evidence="8">
    <location>
        <begin position="68"/>
        <end position="101"/>
    </location>
</feature>
<feature type="region of interest" description="Disordered" evidence="8">
    <location>
        <begin position="1002"/>
        <end position="1051"/>
    </location>
</feature>
<feature type="region of interest" description="Disordered" evidence="8">
    <location>
        <begin position="1093"/>
        <end position="1159"/>
    </location>
</feature>
<feature type="region of interest" description="Disordered" evidence="8">
    <location>
        <begin position="1224"/>
        <end position="1256"/>
    </location>
</feature>
<feature type="region of interest" description="Disordered" evidence="8">
    <location>
        <begin position="1303"/>
        <end position="1369"/>
    </location>
</feature>
<feature type="region of interest" description="Disordered" evidence="8">
    <location>
        <begin position="1390"/>
        <end position="1496"/>
    </location>
</feature>
<feature type="compositionally biased region" description="Acidic residues" evidence="8">
    <location>
        <begin position="83"/>
        <end position="94"/>
    </location>
</feature>
<feature type="compositionally biased region" description="Low complexity" evidence="8">
    <location>
        <begin position="1030"/>
        <end position="1041"/>
    </location>
</feature>
<feature type="compositionally biased region" description="Low complexity" evidence="8">
    <location>
        <begin position="1110"/>
        <end position="1124"/>
    </location>
</feature>
<feature type="compositionally biased region" description="Low complexity" evidence="8">
    <location>
        <begin position="1140"/>
        <end position="1159"/>
    </location>
</feature>
<feature type="compositionally biased region" description="Basic and acidic residues" evidence="8">
    <location>
        <begin position="1227"/>
        <end position="1237"/>
    </location>
</feature>
<feature type="compositionally biased region" description="Polar residues" evidence="8">
    <location>
        <begin position="1246"/>
        <end position="1256"/>
    </location>
</feature>
<feature type="compositionally biased region" description="Polar residues" evidence="8">
    <location>
        <begin position="1306"/>
        <end position="1330"/>
    </location>
</feature>
<feature type="compositionally biased region" description="Low complexity" evidence="8">
    <location>
        <begin position="1440"/>
        <end position="1455"/>
    </location>
</feature>
<feature type="compositionally biased region" description="Acidic residues" evidence="8">
    <location>
        <begin position="1485"/>
        <end position="1496"/>
    </location>
</feature>
<feature type="binding site">
    <location>
        <begin position="135"/>
        <end position="254"/>
    </location>
    <ligand>
        <name>a nucleoside 3',5'-cyclic phosphate</name>
        <dbReference type="ChEBI" id="CHEBI:58464"/>
    </ligand>
</feature>
<feature type="modified residue" description="Phosphoserine" evidence="2">
    <location>
        <position position="501"/>
    </location>
</feature>
<feature type="modified residue" description="Phosphothreonine; by PLK2" evidence="2">
    <location>
        <position position="644"/>
    </location>
</feature>
<feature type="modified residue" description="Phosphoserine; by PLK2" evidence="2">
    <location>
        <position position="806"/>
    </location>
</feature>
<feature type="modified residue" description="Phosphoserine" evidence="2">
    <location>
        <position position="930"/>
    </location>
</feature>
<feature type="modified residue" description="Phosphoserine; by PLK2" evidence="2">
    <location>
        <position position="933"/>
    </location>
</feature>
<feature type="modified residue" description="Phosphoserine; by PLK2" evidence="18">
    <location>
        <position position="1022"/>
    </location>
</feature>
<feature type="modified residue" description="Phosphoserine" evidence="3">
    <location>
        <position position="1079"/>
    </location>
</feature>
<feature type="modified residue" description="Phosphoserine" evidence="3">
    <location>
        <position position="1088"/>
    </location>
</feature>
<feature type="modified residue" description="Phosphoserine" evidence="3">
    <location>
        <position position="1094"/>
    </location>
</feature>
<feature type="modified residue" description="Phosphoserine" evidence="19">
    <location>
        <position position="1115"/>
    </location>
</feature>
<feature type="modified residue" description="Phosphoserine" evidence="19">
    <location>
        <position position="1119"/>
    </location>
</feature>
<feature type="modified residue" description="Phosphoserine" evidence="3">
    <location>
        <position position="1158"/>
    </location>
</feature>
<feature type="modified residue" description="Phosphoserine; by PLK2" evidence="2">
    <location>
        <position position="1175"/>
    </location>
</feature>
<comment type="function">
    <text evidence="10 11 12 13 14 15">Functions as a guanine nucleotide exchange factor (GEF), which activates Rap and Ras family of small GTPases by exchanging bound GDP for free GTP in a cAMP-dependent manner. Serves as a link between cell surface receptors and Rap/Ras GTPases in intracellular signaling cascades. Also acts as an effector for Rap1 by direct association with Rap1-GTP thereby leading to the amplification of Rap1-mediated signaling. Shows weak activity on HRAS. It is controversial whether RAPGEF2 binds cAMP and cGMP or not. Its binding to ligand-activated beta-1 adrenergic receptor ADRB1 leads to the Ras activation through the G(s)-alpha signaling pathway. Involved in the cAMP-induced Ras and Erk1/2 signaling pathway that leads to sustained inhibition of long term melanogenesis by reducing dendrite extension and melanin synthesis. Also provides inhibitory signals for cell proliferation of melanoma cells and promotes their apoptosis in a cAMP-independent nanner. Regulates cAMP-induced neuritogenesis by mediating the Rap1/B-Raf/ERK signaling through a pathway that is independent on both PKA and RAPGEF3/RAPGEF4. Involved in neuron migration and in the formation of the major forebrain fiber connections forming the corpus callosum, the anterior commissure and the hippocampal commissure during brain development. Involved in neuronal growth factor (NGF)-induced sustained activation of Rap1 at late endosomes and in brain-derived neurotrophic factor (BDNF)-induced axon outgrowth of hippocampal neurons. Plays a role in the regulation of embryonic blood vessel formation and in the establishment of basal junction integrity and endothelial barrier function. May be involved in the regulation of the vascular endothelial growth factor receptor KDR and cadherin CDH5 expression at allantois endothelial cell-cell junctions.</text>
</comment>
<comment type="subunit">
    <text evidence="1">Found in a complex, at least composed of KIDINS220, MAGI2, NTRK1 and RAPGEF2; the complex is mainly formed at late endosomes in a neuronal growth factor (NGF)-dependent manner. Interacts (via C-terminal domain) with NEDD4 (via WW domains); this interaction leads to ubiquitination and degradation via the proteasome pathway in a cAMP-independent manner. Interacts with MAGI1 (via PDZ domain). Interacts with ADRB1 (via C-terminal PDZ motif); the interaction is direct. Interacts (via Ras-associating domain) with RAP1A (via GTP-bound active form). Interacts weakly with HRAS (via GDP- and GTP-bound forms). Interacts (via C-terminal domain) with MAGI2 (via PDZ and WW domains). Interacts with CDH1, CTNNB1 and TJP1 (By similarity).</text>
</comment>
<comment type="subcellular location">
    <subcellularLocation>
        <location evidence="1">Cytoplasm</location>
    </subcellularLocation>
    <subcellularLocation>
        <location evidence="1">Cytoplasm</location>
        <location evidence="1">Perinuclear region</location>
    </subcellularLocation>
    <subcellularLocation>
        <location evidence="1">Cell membrane</location>
    </subcellularLocation>
    <subcellularLocation>
        <location evidence="1">Late endosome</location>
    </subcellularLocation>
    <subcellularLocation>
        <location evidence="1">Cell junction</location>
    </subcellularLocation>
    <text evidence="1">Associated with the synaptic plasma membrane. Localized diffusely in the cytoplasm before neuronal growth factor (NGF) stimulation. Recruited to late endosomes after NGF stimulation. Colocalized with the high affinity nerve growth factor receptor NTRK1 at late endosomes. Translocated to the perinuclear region in a RAP1A-dependent manner. Translocated to the cell membrane. Colocalized with CTNNB1 at cell-cell contacts (By similarity).</text>
</comment>
<comment type="tissue specificity">
    <text evidence="10 12 14 15">Expressed in all layers of the cerebral cortex, hippocampus and cerebellum. Expressed in the cortical plate, cingulate cortex and the subventricular zone. Expressed in neurons and endocrine cells (at protein level). Expressed in melanoma cells.</text>
</comment>
<comment type="developmental stage">
    <text evidence="11 14">Expressed in the yolk sacs at vascular endothelial cells at 7.5 dpc. Expressed in the glial sling (GS) at the cortico-septal boundary at 17.5 dpc (at protein level).</text>
</comment>
<comment type="domain">
    <text evidence="1">The Ras-associating domain is necessary for the Rap guanine nucleotide exchange activity. The N-terminal regionis necessary for cAMP-binding. The PDZ domain is necessary for its targeting to the cell membrane (By similarity).</text>
</comment>
<comment type="PTM">
    <text evidence="1">Ubiquitinated by NEDD4, leading to proteasomal degradation.</text>
</comment>
<comment type="PTM">
    <text evidence="1">Phosphorylation by PLK2 promotes its activity.</text>
</comment>
<comment type="disruption phenotype">
    <text evidence="11 12 14">Mice appear normal until 7.5 dpc, but become grossly abnormal and dead at mid-gestation. Show severe defects in yolk sac blood and major vessels formation. Show impair callosal axons to cross the midline during cortical development. Show disruption of all three midline commissure fibers crossing, the corpus callosum, the anterior commissure and the dorsal hippocampal commissure during cortical development. Conditional knockout mice in which rapgef2 is lacking within the dorsal telencephalon result in malformation of the cortical brain structures: developed an ectopic cortical mass (ECM) extending throughout the rostro-caudal axis of the cerebral hemisphere. Mice show also an enlargement of the lateral ventricles and the agenesis of interhemispheric connections: the corpus callosum, the dorsal hippocampus commissure and the anterior commissure (PubMed:19453629).</text>
</comment>
<comment type="similarity">
    <text evidence="16">Belongs to the RAPGEF2 family.</text>
</comment>
<keyword id="KW-0965">Cell junction</keyword>
<keyword id="KW-1003">Cell membrane</keyword>
<keyword id="KW-0963">Cytoplasm</keyword>
<keyword id="KW-0217">Developmental protein</keyword>
<keyword id="KW-0221">Differentiation</keyword>
<keyword id="KW-0967">Endosome</keyword>
<keyword id="KW-0343">GTPase activation</keyword>
<keyword id="KW-0344">Guanine-nucleotide releasing factor</keyword>
<keyword id="KW-0472">Membrane</keyword>
<keyword id="KW-0524">Neurogenesis</keyword>
<keyword id="KW-0597">Phosphoprotein</keyword>
<keyword id="KW-1185">Reference proteome</keyword>
<keyword id="KW-0832">Ubl conjugation</keyword>
<protein>
    <recommendedName>
        <fullName>Rap guanine nucleotide exchange factor 2</fullName>
    </recommendedName>
    <alternativeName>
        <fullName>Cyclic nucleotide ras GEF</fullName>
        <shortName>CNrasGEF</shortName>
    </alternativeName>
    <alternativeName>
        <fullName>Neural RAP guanine nucleotide exchange protein</fullName>
        <shortName>nRap GEP</shortName>
    </alternativeName>
    <alternativeName>
        <fullName>PDZ domain-containing guanine nucleotide exchange factor 1</fullName>
        <shortName>PDZ-GEF1</shortName>
    </alternativeName>
    <alternativeName>
        <fullName>RA-GEF-1</fullName>
    </alternativeName>
    <alternativeName>
        <fullName>Ras/Rap1-associating GEF-1</fullName>
    </alternativeName>
</protein>
<name>RPGF2_MOUSE</name>
<organism evidence="17">
    <name type="scientific">Mus musculus</name>
    <name type="common">Mouse</name>
    <dbReference type="NCBI Taxonomy" id="10090"/>
    <lineage>
        <taxon>Eukaryota</taxon>
        <taxon>Metazoa</taxon>
        <taxon>Chordata</taxon>
        <taxon>Craniata</taxon>
        <taxon>Vertebrata</taxon>
        <taxon>Euteleostomi</taxon>
        <taxon>Mammalia</taxon>
        <taxon>Eutheria</taxon>
        <taxon>Euarchontoglires</taxon>
        <taxon>Glires</taxon>
        <taxon>Rodentia</taxon>
        <taxon>Myomorpha</taxon>
        <taxon>Muroidea</taxon>
        <taxon>Muridae</taxon>
        <taxon>Murinae</taxon>
        <taxon>Mus</taxon>
        <taxon>Mus</taxon>
    </lineage>
</organism>
<gene>
    <name type="primary">Rapgef2</name>
    <name type="synonym">Kiaa0313</name>
    <name type="synonym">Pdzgef1</name>
</gene>
<reference key="1">
    <citation type="journal article" date="2009" name="PLoS Biol.">
        <title>Lineage-specific biology revealed by a finished genome assembly of the mouse.</title>
        <authorList>
            <person name="Church D.M."/>
            <person name="Goodstadt L."/>
            <person name="Hillier L.W."/>
            <person name="Zody M.C."/>
            <person name="Goldstein S."/>
            <person name="She X."/>
            <person name="Bult C.J."/>
            <person name="Agarwala R."/>
            <person name="Cherry J.L."/>
            <person name="DiCuccio M."/>
            <person name="Hlavina W."/>
            <person name="Kapustin Y."/>
            <person name="Meric P."/>
            <person name="Maglott D."/>
            <person name="Birtle Z."/>
            <person name="Marques A.C."/>
            <person name="Graves T."/>
            <person name="Zhou S."/>
            <person name="Teague B."/>
            <person name="Potamousis K."/>
            <person name="Churas C."/>
            <person name="Place M."/>
            <person name="Herschleb J."/>
            <person name="Runnheim R."/>
            <person name="Forrest D."/>
            <person name="Amos-Landgraf J."/>
            <person name="Schwartz D.C."/>
            <person name="Cheng Z."/>
            <person name="Lindblad-Toh K."/>
            <person name="Eichler E.E."/>
            <person name="Ponting C.P."/>
        </authorList>
    </citation>
    <scope>NUCLEOTIDE SEQUENCE [LARGE SCALE GENOMIC DNA]</scope>
    <source>
        <strain>C57BL/6J</strain>
    </source>
</reference>
<reference evidence="16" key="2">
    <citation type="journal article" date="2002" name="DNA Res.">
        <title>Prediction of the coding sequences of mouse homologues of KIAA gene: I. The complete nucleotide sequences of 100 mouse KIAA-homologous cDNAs identified by screening of terminal sequences of cDNA clones randomly sampled from size-fractionated libraries.</title>
        <authorList>
            <person name="Okazaki N."/>
            <person name="Kikuno R."/>
            <person name="Ohara R."/>
            <person name="Inamoto S."/>
            <person name="Hara Y."/>
            <person name="Nagase T."/>
            <person name="Ohara O."/>
            <person name="Koga H."/>
        </authorList>
    </citation>
    <scope>NUCLEOTIDE SEQUENCE [LARGE SCALE MRNA] OF 359-1496</scope>
    <source>
        <tissue evidence="9">Brain</tissue>
    </source>
</reference>
<reference key="3">
    <citation type="journal article" date="2006" name="J. Biol. Chem.">
        <title>The guanine nucleotide exchange factor CNrasGEF regulates melanogenesis and cell survival in melanoma cells.</title>
        <authorList>
            <person name="Amsen E.M."/>
            <person name="Pham N."/>
            <person name="Pak Y."/>
            <person name="Rotin D."/>
        </authorList>
    </citation>
    <scope>FUNCTION</scope>
    <scope>TISSUE SPECIFICITY</scope>
</reference>
<reference key="4">
    <citation type="journal article" date="2006" name="Mol. Cell. Proteomics">
        <title>Comprehensive identification of phosphorylation sites in postsynaptic density preparations.</title>
        <authorList>
            <person name="Trinidad J.C."/>
            <person name="Specht C.G."/>
            <person name="Thalhammer A."/>
            <person name="Schoepfer R."/>
            <person name="Burlingame A.L."/>
        </authorList>
    </citation>
    <scope>IDENTIFICATION BY MASS SPECTROMETRY [LARGE SCALE ANALYSIS]</scope>
    <source>
        <tissue>Brain</tissue>
    </source>
</reference>
<reference key="5">
    <citation type="journal article" date="2007" name="Biochem. Biophys. Res. Commun.">
        <title>Defective vascular morphogenesis and mid-gestation embryonic death in mice lacking RA-GEF-1.</title>
        <authorList>
            <person name="Wei P."/>
            <person name="Satoh T."/>
            <person name="Edamatsu H."/>
            <person name="Aiba A."/>
            <person name="Setsu T."/>
            <person name="Terashima T."/>
            <person name="Kitazawa S."/>
            <person name="Nakao K."/>
            <person name="Yoshikawa Y."/>
            <person name="Tamada M."/>
            <person name="Kataoka T."/>
        </authorList>
    </citation>
    <scope>FUNCTION</scope>
    <scope>DISRUPTION PHENOTYPE</scope>
    <scope>DEVELOPMENTAL STAGE</scope>
</reference>
<reference key="6">
    <citation type="journal article" date="2007" name="Proc. Natl. Acad. Sci. U.S.A.">
        <title>Large-scale phosphorylation analysis of mouse liver.</title>
        <authorList>
            <person name="Villen J."/>
            <person name="Beausoleil S.A."/>
            <person name="Gerber S.A."/>
            <person name="Gygi S.P."/>
        </authorList>
    </citation>
    <scope>IDENTIFICATION BY MASS SPECTROMETRY [LARGE SCALE ANALYSIS]</scope>
    <source>
        <tissue>Liver</tissue>
    </source>
</reference>
<reference key="7">
    <citation type="journal article" date="2009" name="Biochem. Biophys. Res. Commun.">
        <title>Impaired vascular development in the yolk sac and allantois in mice lacking RA-GEF-1.</title>
        <authorList>
            <person name="Kanemura H."/>
            <person name="Satoh T."/>
            <person name="Bilasy S.E."/>
            <person name="Ueda S."/>
            <person name="Hirashima M."/>
            <person name="Kataoka T."/>
        </authorList>
    </citation>
    <scope>FUNCTION</scope>
</reference>
<reference key="8">
    <citation type="journal article" date="2009" name="Eur. J. Neurosci.">
        <title>Dorsal telencephalon-specific RA-GEF-1 knockout mice develop heterotopic cortical mass and commissural fiber defect.</title>
        <authorList>
            <person name="Bilasy S.E."/>
            <person name="Satoh T."/>
            <person name="Ueda S."/>
            <person name="Wei P."/>
            <person name="Kanemura H."/>
            <person name="Aiba A."/>
            <person name="Terashima T."/>
            <person name="Kataoka T."/>
        </authorList>
    </citation>
    <scope>FUNCTION</scope>
    <scope>DISRUPTION PHENOTYPE</scope>
    <scope>TISSUE SPECIFICITY</scope>
</reference>
<reference key="9">
    <citation type="journal article" date="2009" name="Immunity">
        <title>The phagosomal proteome in interferon-gamma-activated macrophages.</title>
        <authorList>
            <person name="Trost M."/>
            <person name="English L."/>
            <person name="Lemieux S."/>
            <person name="Courcelles M."/>
            <person name="Desjardins M."/>
            <person name="Thibault P."/>
        </authorList>
    </citation>
    <scope>PHOSPHORYLATION [LARGE SCALE ANALYSIS] AT SER-1022</scope>
    <scope>IDENTIFICATION BY MASS SPECTROMETRY [LARGE SCALE ANALYSIS]</scope>
</reference>
<reference key="10">
    <citation type="journal article" date="2010" name="Cell">
        <title>A tissue-specific atlas of mouse protein phosphorylation and expression.</title>
        <authorList>
            <person name="Huttlin E.L."/>
            <person name="Jedrychowski M.P."/>
            <person name="Elias J.E."/>
            <person name="Goswami T."/>
            <person name="Rad R."/>
            <person name="Beausoleil S.A."/>
            <person name="Villen J."/>
            <person name="Haas W."/>
            <person name="Sowa M.E."/>
            <person name="Gygi S.P."/>
        </authorList>
    </citation>
    <scope>PHOSPHORYLATION [LARGE SCALE ANALYSIS] AT SER-1115 AND SER-1119</scope>
    <scope>IDENTIFICATION BY MASS SPECTROMETRY [LARGE SCALE ANALYSIS]</scope>
    <source>
        <tissue>Brain</tissue>
        <tissue>Brown adipose tissue</tissue>
        <tissue>Kidney</tissue>
        <tissue>Lung</tissue>
        <tissue>Pancreas</tissue>
        <tissue>Spleen</tissue>
        <tissue>Testis</tissue>
    </source>
</reference>
<reference key="11">
    <citation type="journal article" date="2011" name="Neurosci. Res.">
        <title>RA-GEF-1 (Rapgef2) is essential for proper development of the midline commissures.</title>
        <authorList>
            <person name="Bilasy S.E."/>
            <person name="Satoh T."/>
            <person name="Terashima T."/>
            <person name="Kataoka T."/>
        </authorList>
    </citation>
    <scope>FUNCTION</scope>
    <scope>DISRUPTION PHENOTYPE</scope>
    <scope>TISSUE SPECIFICITY</scope>
    <scope>DEVELOPMENTAL STAGE</scope>
</reference>
<reference key="12">
    <citation type="journal article" date="2013" name="Sci. Signal.">
        <title>Rapgef2 Connects GPCR-Mediated cAMP Signals to ERK Activation in Neuronal and Endocrine Cells.</title>
        <authorList>
            <person name="Emery A.C."/>
            <person name="Eiden M.V."/>
            <person name="Mustafa T."/>
            <person name="Eiden L.E."/>
        </authorList>
    </citation>
    <scope>FUNCTION</scope>
    <scope>TISSUE SPECIFICITY</scope>
</reference>
<accession>Q8CHG7</accession>
<accession>E9QMD0</accession>
<sequence>MKPLAAPANHGVLGQQEKQSLPADFTKLHLTDSLHPQVTHVSSSHSGCSITSDSGSSSLSDIYQATESEAGDMDLSGLPETAVDSEDDDDEEDIERASDPLMSRDIVRDCLEKDPIDRTDDDIEQLLEFMHQLPAFANMTMSVRRELCAVMVFAVVERAGTIVLNDGEELDSWSVILNGSVEVTYPDGKAEILCMGNSFGVSPTMDKEYMKGVMRTKVDDCQFVCIAQQDYCRILNQVEKNMQKVEEEGEIVMVKEHRELDRTGTRKGHIVIKGTSERLTMHLVEEHSVVDPTFIEDFLLTYRTFLSSPMEVGKKLLEWFNDPSLRDKVTRVVLLWVNNHFNDFEGDPAMTRFLEEFENNLEREKMGGHLRLLNIACAAKAKRRLMTLTKPSREAPLPFILLGGSEKGFGIFVDSVDSCSKATEAGLKRGDQILEVNGQNFENIQLSKAMEILRNNTHLSITVKTNLFVFKELLTRLSEEKRNGAPHLPKIGDIKKASRYSIPDLAVDVEQVIGLEKVNKKSKANTVGGRNKLKKILDKTRISILPQKPYNDIGIGQSQDDSIVGLRQTKHIPAALPVSGTLSSSNPDLLQSHHRILDFSTTPDLPDQVLRVFKADQQSRYIMISKDTTAKEVVIQAIREFAVTATPEQYSLCEVSVTPEGVIKQRRLPDQLSKLADRIQLSGRYYLKNNMETETLCSDEDAQELLRESQISLLQLSTVEVATQLSMRNFELFRNIEPTEYIDDLFKLKSKTSCANLKKFEEVINQETFWVASEILRETNQLKRMKIIKHFIKIALHCRECKNFNSMFAIISGLNLAPVARLRTTWEKLPNKYEKLFQDLQDLFDPSRNMAKYRNVLSGQNLQPPVIPLFPVIKKDLTFLHEGNDSKVDGLVNFEKLRMIAKEIRHVGRMASVNMDPALMFRTRKKKWRSLGSLSQGSANATVLDVAQTGGHKKRVRRSSFLNAKKLYEDAQMARKVKQYLSNLELEMDEESLQTLSLQCEPATSTLPKNPGDKKPVKSETSPVAPRAGPQQKVQPQQPLAQPQPPHKVSQGLQVPAVSLYPSRKKVPVKDLPPFGINSPQALKKILSLSEEGSLERHRKQAEDTISNASSQLSSPPTSPQSSPRKGYALALSGTVDNFSDSGHSEISSRSSIVSNSSFDSVPVSLHDERRQRHSVSIVESNLGVGRMERRTLMEPDQYSLGSYAPVSESRGLYAAATVISSPSTEELSHDQGDRASLDAADSGRGSWTSCSSGSHDNIQTIQHQRSWETLPFGHTHFDYSGDAASIWASGGHMDQMMFSDHSTKYNRQNQSRESLEQAQSRASWASSTGYWGEDSEGDTGTIKRRGGKDVSAEAESSSMVPVTTEEAKPVPMPAHIAVTPSTTKGLIARKEGRYREPPPTPPGYVGIPIADFPEGPCHPARKPPDYNVALQRSRMVARPTEAPAPGQTPPAAAASRPGSKPQWHKPSDADPRLAPFQPQGFAGAEEDEDEQVSAV</sequence>
<dbReference type="EMBL" id="AC124358">
    <property type="status" value="NOT_ANNOTATED_CDS"/>
    <property type="molecule type" value="Genomic_DNA"/>
</dbReference>
<dbReference type="EMBL" id="AC157941">
    <property type="status" value="NOT_ANNOTATED_CDS"/>
    <property type="molecule type" value="Genomic_DNA"/>
</dbReference>
<dbReference type="EMBL" id="AC164560">
    <property type="status" value="NOT_ANNOTATED_CDS"/>
    <property type="molecule type" value="Genomic_DNA"/>
</dbReference>
<dbReference type="EMBL" id="AB093228">
    <property type="protein sequence ID" value="BAC41412.1"/>
    <property type="molecule type" value="mRNA"/>
</dbReference>
<dbReference type="CCDS" id="CCDS89637.1"/>
<dbReference type="RefSeq" id="NP_001297465.2">
    <property type="nucleotide sequence ID" value="NM_001310536.2"/>
</dbReference>
<dbReference type="RefSeq" id="XP_006502317.1">
    <property type="nucleotide sequence ID" value="XM_006502254.3"/>
</dbReference>
<dbReference type="SMR" id="Q8CHG7"/>
<dbReference type="BioGRID" id="217954">
    <property type="interactions" value="25"/>
</dbReference>
<dbReference type="FunCoup" id="Q8CHG7">
    <property type="interactions" value="2278"/>
</dbReference>
<dbReference type="IntAct" id="Q8CHG7">
    <property type="interactions" value="8"/>
</dbReference>
<dbReference type="MINT" id="Q8CHG7"/>
<dbReference type="STRING" id="10090.ENSMUSP00000113778"/>
<dbReference type="GlyGen" id="Q8CHG7">
    <property type="glycosylation" value="8 sites, 1 O-linked glycan (6 sites)"/>
</dbReference>
<dbReference type="iPTMnet" id="Q8CHG7"/>
<dbReference type="PhosphoSitePlus" id="Q8CHG7"/>
<dbReference type="SwissPalm" id="Q8CHG7"/>
<dbReference type="jPOST" id="Q8CHG7"/>
<dbReference type="PaxDb" id="10090-ENSMUSP00000113778"/>
<dbReference type="ProteomicsDB" id="260927"/>
<dbReference type="Pumba" id="Q8CHG7"/>
<dbReference type="Antibodypedia" id="28211">
    <property type="antibodies" value="129 antibodies from 21 providers"/>
</dbReference>
<dbReference type="Ensembl" id="ENSMUST00000118100.8">
    <property type="protein sequence ID" value="ENSMUSP00000114119.2"/>
    <property type="gene ID" value="ENSMUSG00000062232.15"/>
</dbReference>
<dbReference type="GeneID" id="76089"/>
<dbReference type="UCSC" id="uc008pnl.1">
    <property type="organism name" value="mouse"/>
</dbReference>
<dbReference type="AGR" id="MGI:2659071"/>
<dbReference type="MGI" id="MGI:2659071">
    <property type="gene designation" value="Rapgef2"/>
</dbReference>
<dbReference type="VEuPathDB" id="HostDB:ENSMUSG00000062232"/>
<dbReference type="eggNOG" id="KOG3542">
    <property type="taxonomic scope" value="Eukaryota"/>
</dbReference>
<dbReference type="GeneTree" id="ENSGT00940000156418"/>
<dbReference type="InParanoid" id="Q8CHG7"/>
<dbReference type="PhylomeDB" id="Q8CHG7"/>
<dbReference type="Reactome" id="R-MMU-5673001">
    <property type="pathway name" value="RAF/MAP kinase cascade"/>
</dbReference>
<dbReference type="BioGRID-ORCS" id="76089">
    <property type="hits" value="2 hits in 61 CRISPR screens"/>
</dbReference>
<dbReference type="CD-CODE" id="CE726F99">
    <property type="entry name" value="Postsynaptic density"/>
</dbReference>
<dbReference type="ChiTaRS" id="Rapgef2">
    <property type="organism name" value="mouse"/>
</dbReference>
<dbReference type="PRO" id="PR:Q8CHG7"/>
<dbReference type="Proteomes" id="UP000000589">
    <property type="component" value="Chromosome 3"/>
</dbReference>
<dbReference type="RNAct" id="Q8CHG7">
    <property type="molecule type" value="protein"/>
</dbReference>
<dbReference type="Bgee" id="ENSMUSG00000062232">
    <property type="expression patterns" value="Expressed in olfactory tubercle and 225 other cell types or tissues"/>
</dbReference>
<dbReference type="ExpressionAtlas" id="Q8CHG7">
    <property type="expression patterns" value="baseline and differential"/>
</dbReference>
<dbReference type="GO" id="GO:0005911">
    <property type="term" value="C:cell-cell junction"/>
    <property type="evidence" value="ECO:0000250"/>
    <property type="project" value="UniProtKB"/>
</dbReference>
<dbReference type="GO" id="GO:0005737">
    <property type="term" value="C:cytoplasm"/>
    <property type="evidence" value="ECO:0000250"/>
    <property type="project" value="UniProtKB"/>
</dbReference>
<dbReference type="GO" id="GO:0005770">
    <property type="term" value="C:late endosome"/>
    <property type="evidence" value="ECO:0000250"/>
    <property type="project" value="UniProtKB"/>
</dbReference>
<dbReference type="GO" id="GO:0016020">
    <property type="term" value="C:membrane"/>
    <property type="evidence" value="ECO:0000250"/>
    <property type="project" value="UniProtKB"/>
</dbReference>
<dbReference type="GO" id="GO:0043005">
    <property type="term" value="C:neuron projection"/>
    <property type="evidence" value="ECO:0000250"/>
    <property type="project" value="UniProtKB"/>
</dbReference>
<dbReference type="GO" id="GO:0043025">
    <property type="term" value="C:neuronal cell body"/>
    <property type="evidence" value="ECO:0000250"/>
    <property type="project" value="UniProtKB"/>
</dbReference>
<dbReference type="GO" id="GO:0048471">
    <property type="term" value="C:perinuclear region of cytoplasm"/>
    <property type="evidence" value="ECO:0000250"/>
    <property type="project" value="UniProtKB"/>
</dbReference>
<dbReference type="GO" id="GO:0005886">
    <property type="term" value="C:plasma membrane"/>
    <property type="evidence" value="ECO:0000250"/>
    <property type="project" value="UniProtKB"/>
</dbReference>
<dbReference type="GO" id="GO:0098794">
    <property type="term" value="C:postsynapse"/>
    <property type="evidence" value="ECO:0000314"/>
    <property type="project" value="SynGO"/>
</dbReference>
<dbReference type="GO" id="GO:0032991">
    <property type="term" value="C:protein-containing complex"/>
    <property type="evidence" value="ECO:0000250"/>
    <property type="project" value="UniProtKB"/>
</dbReference>
<dbReference type="GO" id="GO:0045202">
    <property type="term" value="C:synapse"/>
    <property type="evidence" value="ECO:0000250"/>
    <property type="project" value="UniProtKB"/>
</dbReference>
<dbReference type="GO" id="GO:0031697">
    <property type="term" value="F:beta-1 adrenergic receptor binding"/>
    <property type="evidence" value="ECO:0000250"/>
    <property type="project" value="UniProtKB"/>
</dbReference>
<dbReference type="GO" id="GO:0030552">
    <property type="term" value="F:cAMP binding"/>
    <property type="evidence" value="ECO:0000250"/>
    <property type="project" value="UniProtKB"/>
</dbReference>
<dbReference type="GO" id="GO:0005096">
    <property type="term" value="F:GTPase activator activity"/>
    <property type="evidence" value="ECO:0007669"/>
    <property type="project" value="UniProtKB-KW"/>
</dbReference>
<dbReference type="GO" id="GO:0005085">
    <property type="term" value="F:guanyl-nucleotide exchange factor activity"/>
    <property type="evidence" value="ECO:0000314"/>
    <property type="project" value="UniProtKB"/>
</dbReference>
<dbReference type="GO" id="GO:0030165">
    <property type="term" value="F:PDZ domain binding"/>
    <property type="evidence" value="ECO:0000250"/>
    <property type="project" value="UniProtKB"/>
</dbReference>
<dbReference type="GO" id="GO:0050699">
    <property type="term" value="F:WW domain binding"/>
    <property type="evidence" value="ECO:0000250"/>
    <property type="project" value="UniProtKB"/>
</dbReference>
<dbReference type="GO" id="GO:0071880">
    <property type="term" value="P:adenylate cyclase-activating adrenergic receptor signaling pathway"/>
    <property type="evidence" value="ECO:0000250"/>
    <property type="project" value="UniProtKB"/>
</dbReference>
<dbReference type="GO" id="GO:0007188">
    <property type="term" value="P:adenylate cyclase-modulating G protein-coupled receptor signaling pathway"/>
    <property type="evidence" value="ECO:0000314"/>
    <property type="project" value="UniProtKB"/>
</dbReference>
<dbReference type="GO" id="GO:0001568">
    <property type="term" value="P:blood vessel development"/>
    <property type="evidence" value="ECO:0000315"/>
    <property type="project" value="UniProtKB"/>
</dbReference>
<dbReference type="GO" id="GO:0031547">
    <property type="term" value="P:brain-derived neurotrophic factor receptor signaling pathway"/>
    <property type="evidence" value="ECO:0000250"/>
    <property type="project" value="UniProtKB"/>
</dbReference>
<dbReference type="GO" id="GO:0071320">
    <property type="term" value="P:cellular response to cAMP"/>
    <property type="evidence" value="ECO:0000314"/>
    <property type="project" value="UniProtKB"/>
</dbReference>
<dbReference type="GO" id="GO:0071321">
    <property type="term" value="P:cellular response to cGMP"/>
    <property type="evidence" value="ECO:0000250"/>
    <property type="project" value="UniProtKB"/>
</dbReference>
<dbReference type="GO" id="GO:1990090">
    <property type="term" value="P:cellular response to nerve growth factor stimulus"/>
    <property type="evidence" value="ECO:0000250"/>
    <property type="project" value="UniProtKB"/>
</dbReference>
<dbReference type="GO" id="GO:0061028">
    <property type="term" value="P:establishment of endothelial barrier"/>
    <property type="evidence" value="ECO:0000250"/>
    <property type="project" value="UniProtKB"/>
</dbReference>
<dbReference type="GO" id="GO:0021884">
    <property type="term" value="P:forebrain neuron development"/>
    <property type="evidence" value="ECO:0000315"/>
    <property type="project" value="UniProtKB"/>
</dbReference>
<dbReference type="GO" id="GO:0007186">
    <property type="term" value="P:G protein-coupled receptor signaling pathway"/>
    <property type="evidence" value="ECO:0000314"/>
    <property type="project" value="UniProtKB"/>
</dbReference>
<dbReference type="GO" id="GO:0008285">
    <property type="term" value="P:negative regulation of cell population proliferation"/>
    <property type="evidence" value="ECO:0000315"/>
    <property type="project" value="UniProtKB"/>
</dbReference>
<dbReference type="GO" id="GO:0050774">
    <property type="term" value="P:negative regulation of dendrite morphogenesis"/>
    <property type="evidence" value="ECO:0000315"/>
    <property type="project" value="UniProtKB"/>
</dbReference>
<dbReference type="GO" id="GO:0048022">
    <property type="term" value="P:negative regulation of melanin biosynthetic process"/>
    <property type="evidence" value="ECO:0000315"/>
    <property type="project" value="UniProtKB"/>
</dbReference>
<dbReference type="GO" id="GO:0038180">
    <property type="term" value="P:nerve growth factor signaling pathway"/>
    <property type="evidence" value="ECO:0000250"/>
    <property type="project" value="UniProtKB"/>
</dbReference>
<dbReference type="GO" id="GO:0001764">
    <property type="term" value="P:neuron migration"/>
    <property type="evidence" value="ECO:0000315"/>
    <property type="project" value="UniProtKB"/>
</dbReference>
<dbReference type="GO" id="GO:0031175">
    <property type="term" value="P:neuron projection development"/>
    <property type="evidence" value="ECO:0000315"/>
    <property type="project" value="UniProtKB"/>
</dbReference>
<dbReference type="GO" id="GO:0007218">
    <property type="term" value="P:neuropeptide signaling pathway"/>
    <property type="evidence" value="ECO:0000314"/>
    <property type="project" value="UniProtKB"/>
</dbReference>
<dbReference type="GO" id="GO:2000481">
    <property type="term" value="P:positive regulation of cAMP-dependent protein kinase activity"/>
    <property type="evidence" value="ECO:0000315"/>
    <property type="project" value="UniProtKB"/>
</dbReference>
<dbReference type="GO" id="GO:2000670">
    <property type="term" value="P:positive regulation of dendritic cell apoptotic process"/>
    <property type="evidence" value="ECO:0000315"/>
    <property type="project" value="UniProtKB"/>
</dbReference>
<dbReference type="GO" id="GO:0070374">
    <property type="term" value="P:positive regulation of ERK1 and ERK2 cascade"/>
    <property type="evidence" value="ECO:0000314"/>
    <property type="project" value="UniProtKB"/>
</dbReference>
<dbReference type="GO" id="GO:0043547">
    <property type="term" value="P:positive regulation of GTPase activity"/>
    <property type="evidence" value="ECO:0000314"/>
    <property type="project" value="UniProtKB"/>
</dbReference>
<dbReference type="GO" id="GO:2001224">
    <property type="term" value="P:positive regulation of neuron migration"/>
    <property type="evidence" value="ECO:0000315"/>
    <property type="project" value="UniProtKB"/>
</dbReference>
<dbReference type="GO" id="GO:0010976">
    <property type="term" value="P:positive regulation of neuron projection development"/>
    <property type="evidence" value="ECO:0000250"/>
    <property type="project" value="UniProtKB"/>
</dbReference>
<dbReference type="GO" id="GO:0032092">
    <property type="term" value="P:positive regulation of protein binding"/>
    <property type="evidence" value="ECO:0000314"/>
    <property type="project" value="UniProtKB"/>
</dbReference>
<dbReference type="GO" id="GO:0045860">
    <property type="term" value="P:positive regulation of protein kinase activity"/>
    <property type="evidence" value="ECO:0000314"/>
    <property type="project" value="UniProtKB"/>
</dbReference>
<dbReference type="GO" id="GO:2001214">
    <property type="term" value="P:positive regulation of vasculogenesis"/>
    <property type="evidence" value="ECO:0000315"/>
    <property type="project" value="UniProtKB"/>
</dbReference>
<dbReference type="GO" id="GO:0032486">
    <property type="term" value="P:Rap protein signal transduction"/>
    <property type="evidence" value="ECO:0000250"/>
    <property type="project" value="UniProtKB"/>
</dbReference>
<dbReference type="GO" id="GO:1901888">
    <property type="term" value="P:regulation of cell junction assembly"/>
    <property type="evidence" value="ECO:0000250"/>
    <property type="project" value="UniProtKB"/>
</dbReference>
<dbReference type="GO" id="GO:0099159">
    <property type="term" value="P:regulation of modification of postsynaptic structure"/>
    <property type="evidence" value="ECO:0000314"/>
    <property type="project" value="SynGO"/>
</dbReference>
<dbReference type="GO" id="GO:0048167">
    <property type="term" value="P:regulation of synaptic plasticity"/>
    <property type="evidence" value="ECO:0000250"/>
    <property type="project" value="UniProtKB"/>
</dbReference>
<dbReference type="GO" id="GO:0021591">
    <property type="term" value="P:ventricular system development"/>
    <property type="evidence" value="ECO:0000315"/>
    <property type="project" value="UniProtKB"/>
</dbReference>
<dbReference type="CDD" id="cd00038">
    <property type="entry name" value="CAP_ED"/>
    <property type="match status" value="1"/>
</dbReference>
<dbReference type="CDD" id="cd06755">
    <property type="entry name" value="PDZ_RapGEF2_RapGEF6-like"/>
    <property type="match status" value="1"/>
</dbReference>
<dbReference type="CDD" id="cd01785">
    <property type="entry name" value="RA_PDZ-GEF1"/>
    <property type="match status" value="1"/>
</dbReference>
<dbReference type="CDD" id="cd00155">
    <property type="entry name" value="RasGEF"/>
    <property type="match status" value="1"/>
</dbReference>
<dbReference type="CDD" id="cd06224">
    <property type="entry name" value="REM"/>
    <property type="match status" value="1"/>
</dbReference>
<dbReference type="FunFam" id="2.60.120.10:FF:000008">
    <property type="entry name" value="Rap guanine nucleotide exchange factor (GEF) 2"/>
    <property type="match status" value="1"/>
</dbReference>
<dbReference type="FunFam" id="1.10.840.10:FF:000001">
    <property type="entry name" value="Rap guanine nucleotide exchange factor (GEF) 6"/>
    <property type="match status" value="1"/>
</dbReference>
<dbReference type="FunFam" id="2.30.42.10:FF:000024">
    <property type="entry name" value="rap guanine nucleotide exchange factor 2 isoform X1"/>
    <property type="match status" value="1"/>
</dbReference>
<dbReference type="FunFam" id="1.20.870.10:FF:000001">
    <property type="entry name" value="rap guanine nucleotide exchange factor 2 isoform X2"/>
    <property type="match status" value="1"/>
</dbReference>
<dbReference type="Gene3D" id="2.30.42.10">
    <property type="match status" value="1"/>
</dbReference>
<dbReference type="Gene3D" id="2.60.120.10">
    <property type="entry name" value="Jelly Rolls"/>
    <property type="match status" value="1"/>
</dbReference>
<dbReference type="Gene3D" id="3.10.20.90">
    <property type="entry name" value="Phosphatidylinositol 3-kinase Catalytic Subunit, Chain A, domain 1"/>
    <property type="match status" value="1"/>
</dbReference>
<dbReference type="Gene3D" id="1.10.840.10">
    <property type="entry name" value="Ras guanine-nucleotide exchange factors catalytic domain"/>
    <property type="match status" value="1"/>
</dbReference>
<dbReference type="Gene3D" id="1.20.870.10">
    <property type="entry name" value="Son of sevenless (SoS) protein Chain: S domain 1"/>
    <property type="match status" value="1"/>
</dbReference>
<dbReference type="InterPro" id="IPR000595">
    <property type="entry name" value="cNMP-bd_dom"/>
</dbReference>
<dbReference type="InterPro" id="IPR018490">
    <property type="entry name" value="cNMP-bd_dom_sf"/>
</dbReference>
<dbReference type="InterPro" id="IPR001478">
    <property type="entry name" value="PDZ"/>
</dbReference>
<dbReference type="InterPro" id="IPR036034">
    <property type="entry name" value="PDZ_sf"/>
</dbReference>
<dbReference type="InterPro" id="IPR000159">
    <property type="entry name" value="RA_dom"/>
</dbReference>
<dbReference type="InterPro" id="IPR000651">
    <property type="entry name" value="Ras-like_Gua-exchang_fac_N"/>
</dbReference>
<dbReference type="InterPro" id="IPR023578">
    <property type="entry name" value="Ras_GEF_dom_sf"/>
</dbReference>
<dbReference type="InterPro" id="IPR001895">
    <property type="entry name" value="RASGEF_cat_dom"/>
</dbReference>
<dbReference type="InterPro" id="IPR036964">
    <property type="entry name" value="RASGEF_cat_dom_sf"/>
</dbReference>
<dbReference type="InterPro" id="IPR014710">
    <property type="entry name" value="RmlC-like_jellyroll"/>
</dbReference>
<dbReference type="InterPro" id="IPR029071">
    <property type="entry name" value="Ubiquitin-like_domsf"/>
</dbReference>
<dbReference type="PANTHER" id="PTHR45161">
    <property type="entry name" value="CYTOSKELETON-ASSOCIATED PROTEIN 4"/>
    <property type="match status" value="1"/>
</dbReference>
<dbReference type="PANTHER" id="PTHR45161:SF2">
    <property type="entry name" value="RAP GUANINE NUCLEOTIDE EXCHANGE FACTOR 2"/>
    <property type="match status" value="1"/>
</dbReference>
<dbReference type="Pfam" id="PF00595">
    <property type="entry name" value="PDZ"/>
    <property type="match status" value="1"/>
</dbReference>
<dbReference type="Pfam" id="PF00788">
    <property type="entry name" value="RA"/>
    <property type="match status" value="1"/>
</dbReference>
<dbReference type="Pfam" id="PF00617">
    <property type="entry name" value="RasGEF"/>
    <property type="match status" value="1"/>
</dbReference>
<dbReference type="Pfam" id="PF00618">
    <property type="entry name" value="RasGEF_N"/>
    <property type="match status" value="1"/>
</dbReference>
<dbReference type="SMART" id="SM00100">
    <property type="entry name" value="cNMP"/>
    <property type="match status" value="1"/>
</dbReference>
<dbReference type="SMART" id="SM00228">
    <property type="entry name" value="PDZ"/>
    <property type="match status" value="1"/>
</dbReference>
<dbReference type="SMART" id="SM00314">
    <property type="entry name" value="RA"/>
    <property type="match status" value="1"/>
</dbReference>
<dbReference type="SMART" id="SM00147">
    <property type="entry name" value="RasGEF"/>
    <property type="match status" value="1"/>
</dbReference>
<dbReference type="SMART" id="SM00229">
    <property type="entry name" value="RasGEFN"/>
    <property type="match status" value="1"/>
</dbReference>
<dbReference type="SUPFAM" id="SSF51206">
    <property type="entry name" value="cAMP-binding domain-like"/>
    <property type="match status" value="1"/>
</dbReference>
<dbReference type="SUPFAM" id="SSF50156">
    <property type="entry name" value="PDZ domain-like"/>
    <property type="match status" value="1"/>
</dbReference>
<dbReference type="SUPFAM" id="SSF48366">
    <property type="entry name" value="Ras GEF"/>
    <property type="match status" value="1"/>
</dbReference>
<dbReference type="SUPFAM" id="SSF54236">
    <property type="entry name" value="Ubiquitin-like"/>
    <property type="match status" value="1"/>
</dbReference>
<dbReference type="PROSITE" id="PS50042">
    <property type="entry name" value="CNMP_BINDING_3"/>
    <property type="match status" value="1"/>
</dbReference>
<dbReference type="PROSITE" id="PS50106">
    <property type="entry name" value="PDZ"/>
    <property type="match status" value="1"/>
</dbReference>
<dbReference type="PROSITE" id="PS50200">
    <property type="entry name" value="RA"/>
    <property type="match status" value="1"/>
</dbReference>
<dbReference type="PROSITE" id="PS50009">
    <property type="entry name" value="RASGEF_CAT"/>
    <property type="match status" value="1"/>
</dbReference>
<dbReference type="PROSITE" id="PS50212">
    <property type="entry name" value="RASGEF_NTER"/>
    <property type="match status" value="1"/>
</dbReference>
<evidence type="ECO:0000250" key="1"/>
<evidence type="ECO:0000250" key="2">
    <source>
        <dbReference type="UniProtKB" id="F1M386"/>
    </source>
</evidence>
<evidence type="ECO:0000250" key="3">
    <source>
        <dbReference type="UniProtKB" id="Q9Y4G8"/>
    </source>
</evidence>
<evidence type="ECO:0000255" key="4">
    <source>
        <dbReference type="PROSITE-ProRule" id="PRU00135"/>
    </source>
</evidence>
<evidence type="ECO:0000255" key="5">
    <source>
        <dbReference type="PROSITE-ProRule" id="PRU00143"/>
    </source>
</evidence>
<evidence type="ECO:0000255" key="6">
    <source>
        <dbReference type="PROSITE-ProRule" id="PRU00166"/>
    </source>
</evidence>
<evidence type="ECO:0000255" key="7">
    <source>
        <dbReference type="PROSITE-ProRule" id="PRU00168"/>
    </source>
</evidence>
<evidence type="ECO:0000256" key="8">
    <source>
        <dbReference type="SAM" id="MobiDB-lite"/>
    </source>
</evidence>
<evidence type="ECO:0000269" key="9">
    <source>
    </source>
</evidence>
<evidence type="ECO:0000269" key="10">
    <source>
    </source>
</evidence>
<evidence type="ECO:0000269" key="11">
    <source>
    </source>
</evidence>
<evidence type="ECO:0000269" key="12">
    <source>
    </source>
</evidence>
<evidence type="ECO:0000269" key="13">
    <source>
    </source>
</evidence>
<evidence type="ECO:0000269" key="14">
    <source>
    </source>
</evidence>
<evidence type="ECO:0000269" key="15">
    <source>
    </source>
</evidence>
<evidence type="ECO:0000305" key="16"/>
<evidence type="ECO:0000312" key="17">
    <source>
        <dbReference type="EMBL" id="BAC41412.1"/>
    </source>
</evidence>
<evidence type="ECO:0007744" key="18">
    <source>
    </source>
</evidence>
<evidence type="ECO:0007744" key="19">
    <source>
    </source>
</evidence>
<proteinExistence type="evidence at protein level"/>